<keyword id="KW-0687">Ribonucleoprotein</keyword>
<keyword id="KW-0689">Ribosomal protein</keyword>
<organism>
    <name type="scientific">Bacillus anthracis (strain A0248)</name>
    <dbReference type="NCBI Taxonomy" id="592021"/>
    <lineage>
        <taxon>Bacteria</taxon>
        <taxon>Bacillati</taxon>
        <taxon>Bacillota</taxon>
        <taxon>Bacilli</taxon>
        <taxon>Bacillales</taxon>
        <taxon>Bacillaceae</taxon>
        <taxon>Bacillus</taxon>
        <taxon>Bacillus cereus group</taxon>
    </lineage>
</organism>
<name>RL28_BACAA</name>
<feature type="chain" id="PRO_1000195900" description="Large ribosomal subunit protein bL28">
    <location>
        <begin position="1"/>
        <end position="62"/>
    </location>
</feature>
<feature type="region of interest" description="Disordered" evidence="2">
    <location>
        <begin position="1"/>
        <end position="28"/>
    </location>
</feature>
<protein>
    <recommendedName>
        <fullName evidence="1">Large ribosomal subunit protein bL28</fullName>
    </recommendedName>
    <alternativeName>
        <fullName evidence="3">50S ribosomal protein L28</fullName>
    </alternativeName>
</protein>
<reference key="1">
    <citation type="submission" date="2009-04" db="EMBL/GenBank/DDBJ databases">
        <title>Genome sequence of Bacillus anthracis A0248.</title>
        <authorList>
            <person name="Dodson R.J."/>
            <person name="Munk A.C."/>
            <person name="Bruce D."/>
            <person name="Detter C."/>
            <person name="Tapia R."/>
            <person name="Sutton G."/>
            <person name="Sims D."/>
            <person name="Brettin T."/>
        </authorList>
    </citation>
    <scope>NUCLEOTIDE SEQUENCE [LARGE SCALE GENOMIC DNA]</scope>
    <source>
        <strain>A0248</strain>
    </source>
</reference>
<sequence>MARVCTITGRKARSGNSRSHAMNATKRKWGANLQKVRVRIDGKVQRVYVSARALKSGKIERV</sequence>
<proteinExistence type="inferred from homology"/>
<gene>
    <name evidence="1" type="primary">rpmB</name>
    <name type="ordered locus">BAA_4020</name>
</gene>
<accession>C3P629</accession>
<dbReference type="EMBL" id="CP001598">
    <property type="protein sequence ID" value="ACQ50396.1"/>
    <property type="molecule type" value="Genomic_DNA"/>
</dbReference>
<dbReference type="RefSeq" id="WP_000124778.1">
    <property type="nucleotide sequence ID" value="NC_012659.1"/>
</dbReference>
<dbReference type="SMR" id="C3P629"/>
<dbReference type="GeneID" id="45023686"/>
<dbReference type="KEGG" id="bai:BAA_4020"/>
<dbReference type="HOGENOM" id="CLU_064548_7_1_9"/>
<dbReference type="GO" id="GO:1990904">
    <property type="term" value="C:ribonucleoprotein complex"/>
    <property type="evidence" value="ECO:0007669"/>
    <property type="project" value="UniProtKB-KW"/>
</dbReference>
<dbReference type="GO" id="GO:0005840">
    <property type="term" value="C:ribosome"/>
    <property type="evidence" value="ECO:0007669"/>
    <property type="project" value="UniProtKB-KW"/>
</dbReference>
<dbReference type="GO" id="GO:0003735">
    <property type="term" value="F:structural constituent of ribosome"/>
    <property type="evidence" value="ECO:0007669"/>
    <property type="project" value="InterPro"/>
</dbReference>
<dbReference type="GO" id="GO:0006412">
    <property type="term" value="P:translation"/>
    <property type="evidence" value="ECO:0007669"/>
    <property type="project" value="UniProtKB-UniRule"/>
</dbReference>
<dbReference type="Gene3D" id="2.30.170.40">
    <property type="entry name" value="Ribosomal protein L28/L24"/>
    <property type="match status" value="1"/>
</dbReference>
<dbReference type="HAMAP" id="MF_00373">
    <property type="entry name" value="Ribosomal_bL28"/>
    <property type="match status" value="1"/>
</dbReference>
<dbReference type="InterPro" id="IPR050096">
    <property type="entry name" value="Bacterial_rp_bL28"/>
</dbReference>
<dbReference type="InterPro" id="IPR026569">
    <property type="entry name" value="Ribosomal_bL28"/>
</dbReference>
<dbReference type="InterPro" id="IPR034704">
    <property type="entry name" value="Ribosomal_bL28/bL31-like_sf"/>
</dbReference>
<dbReference type="InterPro" id="IPR001383">
    <property type="entry name" value="Ribosomal_bL28_bact-type"/>
</dbReference>
<dbReference type="InterPro" id="IPR037147">
    <property type="entry name" value="Ribosomal_bL28_sf"/>
</dbReference>
<dbReference type="NCBIfam" id="TIGR00009">
    <property type="entry name" value="L28"/>
    <property type="match status" value="1"/>
</dbReference>
<dbReference type="PANTHER" id="PTHR39080">
    <property type="entry name" value="50S RIBOSOMAL PROTEIN L28"/>
    <property type="match status" value="1"/>
</dbReference>
<dbReference type="PANTHER" id="PTHR39080:SF1">
    <property type="entry name" value="LARGE RIBOSOMAL SUBUNIT PROTEIN BL28A"/>
    <property type="match status" value="1"/>
</dbReference>
<dbReference type="Pfam" id="PF00830">
    <property type="entry name" value="Ribosomal_L28"/>
    <property type="match status" value="1"/>
</dbReference>
<dbReference type="SUPFAM" id="SSF143800">
    <property type="entry name" value="L28p-like"/>
    <property type="match status" value="1"/>
</dbReference>
<comment type="similarity">
    <text evidence="1">Belongs to the bacterial ribosomal protein bL28 family.</text>
</comment>
<evidence type="ECO:0000255" key="1">
    <source>
        <dbReference type="HAMAP-Rule" id="MF_00373"/>
    </source>
</evidence>
<evidence type="ECO:0000256" key="2">
    <source>
        <dbReference type="SAM" id="MobiDB-lite"/>
    </source>
</evidence>
<evidence type="ECO:0000305" key="3"/>